<feature type="chain" id="PRO_0000220126" description="Thiopurine S-methyltransferase">
    <location>
        <begin position="1"/>
        <end position="218"/>
    </location>
</feature>
<feature type="binding site" evidence="1">
    <location>
        <position position="10"/>
    </location>
    <ligand>
        <name>S-adenosyl-L-methionine</name>
        <dbReference type="ChEBI" id="CHEBI:59789"/>
    </ligand>
</feature>
<feature type="binding site" evidence="1">
    <location>
        <position position="45"/>
    </location>
    <ligand>
        <name>S-adenosyl-L-methionine</name>
        <dbReference type="ChEBI" id="CHEBI:59789"/>
    </ligand>
</feature>
<feature type="binding site" evidence="1">
    <location>
        <position position="66"/>
    </location>
    <ligand>
        <name>S-adenosyl-L-methionine</name>
        <dbReference type="ChEBI" id="CHEBI:59789"/>
    </ligand>
</feature>
<feature type="binding site" evidence="1">
    <location>
        <position position="123"/>
    </location>
    <ligand>
        <name>S-adenosyl-L-methionine</name>
        <dbReference type="ChEBI" id="CHEBI:59789"/>
    </ligand>
</feature>
<name>TPMT_PSEAE</name>
<accession>Q9I011</accession>
<comment type="catalytic activity">
    <reaction evidence="1">
        <text>S-adenosyl-L-methionine + a thiopurine = S-adenosyl-L-homocysteine + a thiopurine S-methylether.</text>
        <dbReference type="EC" id="2.1.1.67"/>
    </reaction>
</comment>
<comment type="subcellular location">
    <subcellularLocation>
        <location evidence="1">Cytoplasm</location>
    </subcellularLocation>
</comment>
<comment type="similarity">
    <text evidence="1">Belongs to the class I-like SAM-binding methyltransferase superfamily. TPMT family.</text>
</comment>
<keyword id="KW-0963">Cytoplasm</keyword>
<keyword id="KW-0489">Methyltransferase</keyword>
<keyword id="KW-1185">Reference proteome</keyword>
<keyword id="KW-0949">S-adenosyl-L-methionine</keyword>
<keyword id="KW-0808">Transferase</keyword>
<dbReference type="EC" id="2.1.1.67" evidence="1"/>
<dbReference type="EMBL" id="AE004091">
    <property type="protein sequence ID" value="AAG06220.1"/>
    <property type="molecule type" value="Genomic_DNA"/>
</dbReference>
<dbReference type="PIR" id="A83291">
    <property type="entry name" value="A83291"/>
</dbReference>
<dbReference type="RefSeq" id="NP_251522.1">
    <property type="nucleotide sequence ID" value="NC_002516.2"/>
</dbReference>
<dbReference type="RefSeq" id="WP_003114764.1">
    <property type="nucleotide sequence ID" value="NZ_QZGE01000011.1"/>
</dbReference>
<dbReference type="SMR" id="Q9I011"/>
<dbReference type="STRING" id="208964.PA2832"/>
<dbReference type="PaxDb" id="208964-PA2832"/>
<dbReference type="DNASU" id="882816"/>
<dbReference type="GeneID" id="882816"/>
<dbReference type="KEGG" id="pae:PA2832"/>
<dbReference type="PATRIC" id="fig|208964.12.peg.2969"/>
<dbReference type="PseudoCAP" id="PA2832"/>
<dbReference type="HOGENOM" id="CLU_085515_1_0_6"/>
<dbReference type="InParanoid" id="Q9I011"/>
<dbReference type="OrthoDB" id="9778208at2"/>
<dbReference type="PhylomeDB" id="Q9I011"/>
<dbReference type="BioCyc" id="PAER208964:G1FZ6-2881-MONOMER"/>
<dbReference type="Proteomes" id="UP000002438">
    <property type="component" value="Chromosome"/>
</dbReference>
<dbReference type="GO" id="GO:0005737">
    <property type="term" value="C:cytoplasm"/>
    <property type="evidence" value="ECO:0007669"/>
    <property type="project" value="UniProtKB-SubCell"/>
</dbReference>
<dbReference type="GO" id="GO:0008119">
    <property type="term" value="F:thiopurine S-methyltransferase activity"/>
    <property type="evidence" value="ECO:0000318"/>
    <property type="project" value="GO_Central"/>
</dbReference>
<dbReference type="GO" id="GO:0032259">
    <property type="term" value="P:methylation"/>
    <property type="evidence" value="ECO:0007669"/>
    <property type="project" value="UniProtKB-KW"/>
</dbReference>
<dbReference type="GO" id="GO:0010038">
    <property type="term" value="P:response to metal ion"/>
    <property type="evidence" value="ECO:0007669"/>
    <property type="project" value="InterPro"/>
</dbReference>
<dbReference type="FunFam" id="3.40.50.150:FF:000101">
    <property type="entry name" value="Thiopurine S-methyltransferase"/>
    <property type="match status" value="1"/>
</dbReference>
<dbReference type="Gene3D" id="3.40.50.150">
    <property type="entry name" value="Vaccinia Virus protein VP39"/>
    <property type="match status" value="1"/>
</dbReference>
<dbReference type="HAMAP" id="MF_00812">
    <property type="entry name" value="Thiopur_methtran"/>
    <property type="match status" value="1"/>
</dbReference>
<dbReference type="InterPro" id="IPR029063">
    <property type="entry name" value="SAM-dependent_MTases_sf"/>
</dbReference>
<dbReference type="InterPro" id="IPR022474">
    <property type="entry name" value="Thiopur_S-MeTfrase_Se/Te_detox"/>
</dbReference>
<dbReference type="InterPro" id="IPR025835">
    <property type="entry name" value="Thiopurine_S-MeTrfase"/>
</dbReference>
<dbReference type="InterPro" id="IPR008854">
    <property type="entry name" value="TPMT"/>
</dbReference>
<dbReference type="NCBIfam" id="NF009732">
    <property type="entry name" value="PRK13255.1"/>
    <property type="match status" value="1"/>
</dbReference>
<dbReference type="NCBIfam" id="TIGR03840">
    <property type="entry name" value="TMPT_Se_Te"/>
    <property type="match status" value="1"/>
</dbReference>
<dbReference type="PANTHER" id="PTHR10259">
    <property type="entry name" value="THIOPURINE S-METHYLTRANSFERASE"/>
    <property type="match status" value="1"/>
</dbReference>
<dbReference type="PANTHER" id="PTHR10259:SF11">
    <property type="entry name" value="THIOPURINE S-METHYLTRANSFERASE"/>
    <property type="match status" value="1"/>
</dbReference>
<dbReference type="Pfam" id="PF05724">
    <property type="entry name" value="TPMT"/>
    <property type="match status" value="1"/>
</dbReference>
<dbReference type="PIRSF" id="PIRSF023956">
    <property type="entry name" value="Thiopurine_S-methyltransferase"/>
    <property type="match status" value="1"/>
</dbReference>
<dbReference type="SUPFAM" id="SSF53335">
    <property type="entry name" value="S-adenosyl-L-methionine-dependent methyltransferases"/>
    <property type="match status" value="1"/>
</dbReference>
<dbReference type="PROSITE" id="PS51585">
    <property type="entry name" value="SAM_MT_TPMT"/>
    <property type="match status" value="1"/>
</dbReference>
<gene>
    <name evidence="1" type="primary">tpm</name>
    <name type="ordered locus">PA2832</name>
</gene>
<proteinExistence type="inferred from homology"/>
<sequence length="218" mass="24875">MQADFWHARWANNQIGFHLDEINPYLMRHLSRLRLQAGEQILVPLCGKTLDLAWLAAQGLEVLGVELSEKAVSDFFEEHDLHPEIDQLDGFRRYRVAGITLLQGDFFALQAEHLAQCRAFYDRAALIALPPEMRERYAGHLQAVLPTRSLGLLVTIDYPQAEMAGPPFAVPDEEVRGYYAGGWRIEELERGDVLGVNWKFLERGVSWLDEAVYLLERG</sequence>
<reference key="1">
    <citation type="journal article" date="2000" name="Nature">
        <title>Complete genome sequence of Pseudomonas aeruginosa PAO1, an opportunistic pathogen.</title>
        <authorList>
            <person name="Stover C.K."/>
            <person name="Pham X.-Q.T."/>
            <person name="Erwin A.L."/>
            <person name="Mizoguchi S.D."/>
            <person name="Warrener P."/>
            <person name="Hickey M.J."/>
            <person name="Brinkman F.S.L."/>
            <person name="Hufnagle W.O."/>
            <person name="Kowalik D.J."/>
            <person name="Lagrou M."/>
            <person name="Garber R.L."/>
            <person name="Goltry L."/>
            <person name="Tolentino E."/>
            <person name="Westbrock-Wadman S."/>
            <person name="Yuan Y."/>
            <person name="Brody L.L."/>
            <person name="Coulter S.N."/>
            <person name="Folger K.R."/>
            <person name="Kas A."/>
            <person name="Larbig K."/>
            <person name="Lim R.M."/>
            <person name="Smith K.A."/>
            <person name="Spencer D.H."/>
            <person name="Wong G.K.-S."/>
            <person name="Wu Z."/>
            <person name="Paulsen I.T."/>
            <person name="Reizer J."/>
            <person name="Saier M.H. Jr."/>
            <person name="Hancock R.E.W."/>
            <person name="Lory S."/>
            <person name="Olson M.V."/>
        </authorList>
    </citation>
    <scope>NUCLEOTIDE SEQUENCE [LARGE SCALE GENOMIC DNA]</scope>
    <source>
        <strain>ATCC 15692 / DSM 22644 / CIP 104116 / JCM 14847 / LMG 12228 / 1C / PRS 101 / PAO1</strain>
    </source>
</reference>
<protein>
    <recommendedName>
        <fullName evidence="1">Thiopurine S-methyltransferase</fullName>
        <ecNumber evidence="1">2.1.1.67</ecNumber>
    </recommendedName>
    <alternativeName>
        <fullName evidence="1">Thiopurine methyltransferase</fullName>
    </alternativeName>
</protein>
<evidence type="ECO:0000255" key="1">
    <source>
        <dbReference type="HAMAP-Rule" id="MF_00812"/>
    </source>
</evidence>
<organism>
    <name type="scientific">Pseudomonas aeruginosa (strain ATCC 15692 / DSM 22644 / CIP 104116 / JCM 14847 / LMG 12228 / 1C / PRS 101 / PAO1)</name>
    <dbReference type="NCBI Taxonomy" id="208964"/>
    <lineage>
        <taxon>Bacteria</taxon>
        <taxon>Pseudomonadati</taxon>
        <taxon>Pseudomonadota</taxon>
        <taxon>Gammaproteobacteria</taxon>
        <taxon>Pseudomonadales</taxon>
        <taxon>Pseudomonadaceae</taxon>
        <taxon>Pseudomonas</taxon>
    </lineage>
</organism>